<evidence type="ECO:0000250" key="1"/>
<evidence type="ECO:0000255" key="2"/>
<evidence type="ECO:0000255" key="3">
    <source>
        <dbReference type="PROSITE-ProRule" id="PRU01070"/>
    </source>
</evidence>
<evidence type="ECO:0000305" key="4"/>
<proteinExistence type="inferred from homology"/>
<gene>
    <name type="primary">xpsJ</name>
    <name type="synonym">pefJ</name>
    <name type="ordered locus">XCC0665</name>
</gene>
<accession>P31740</accession>
<name>GSPJ_XANCP</name>
<keyword id="KW-0472">Membrane</keyword>
<keyword id="KW-0488">Methylation</keyword>
<keyword id="KW-0653">Protein transport</keyword>
<keyword id="KW-1185">Reference proteome</keyword>
<keyword id="KW-0812">Transmembrane</keyword>
<keyword id="KW-1133">Transmembrane helix</keyword>
<keyword id="KW-0813">Transport</keyword>
<comment type="function">
    <text evidence="1">Involved in a type II secretion system (T2SS, formerly general secretion pathway, GSP) for the export of proteins.</text>
</comment>
<comment type="subcellular location">
    <subcellularLocation>
        <location evidence="2">Membrane</location>
        <topology evidence="2">Single-pass membrane protein</topology>
    </subcellularLocation>
</comment>
<comment type="similarity">
    <text evidence="4">Belongs to the GSP J family.</text>
</comment>
<comment type="sequence caution" evidence="4">
    <conflict type="erroneous initiation">
        <sequence resource="EMBL-CDS" id="AAM39981"/>
    </conflict>
    <text>Truncated N-terminus.</text>
</comment>
<feature type="propeptide" id="PRO_0000024260" description="Leader sequence" evidence="3">
    <location>
        <begin position="1"/>
        <end position="7"/>
    </location>
</feature>
<feature type="chain" id="PRO_0000024261" description="Type II secretion system protein J">
    <location>
        <begin position="8"/>
        <end position="211"/>
    </location>
</feature>
<feature type="transmembrane region" description="Helical" evidence="2">
    <location>
        <begin position="8"/>
        <end position="28"/>
    </location>
</feature>
<feature type="modified residue" description="N-methylphenylalanine" evidence="3">
    <location>
        <position position="8"/>
    </location>
</feature>
<feature type="sequence conflict" description="In Ref. 1; AAC27380." evidence="4" ref="1">
    <original>A</original>
    <variation>S</variation>
    <location>
        <position position="191"/>
    </location>
</feature>
<feature type="sequence conflict" description="In Ref. 1; AAC27380." evidence="4" ref="1">
    <original>L</original>
    <variation>V</variation>
    <location>
        <position position="209"/>
    </location>
</feature>
<sequence>MRPRAAGFTLIEVLLATMLLVGGLALAFATLRSASAISQRGEAIAQRSERTRAVEEFLRRRLSAALPIAMGIDTQSQQPMLFVGEPQRMRFAADVPDYLGRGGPYLHDVSVVGDGEQRTLTIALTMLQSGKEIEEGNALPAETLADDVQQVSFRYRGLDPQSGALSGWLPQWEWHDRLPLLVRIDIRSGGAAWPPVVVALPQSGGGGALAQ</sequence>
<dbReference type="EMBL" id="L02630">
    <property type="protein sequence ID" value="AAC27380.1"/>
    <property type="molecule type" value="Genomic_DNA"/>
</dbReference>
<dbReference type="EMBL" id="AE008922">
    <property type="protein sequence ID" value="AAM39981.1"/>
    <property type="status" value="ALT_INIT"/>
    <property type="molecule type" value="Genomic_DNA"/>
</dbReference>
<dbReference type="EMBL" id="X59079">
    <property type="protein sequence ID" value="CAA41808.1"/>
    <property type="molecule type" value="Genomic_DNA"/>
</dbReference>
<dbReference type="PIR" id="T12061">
    <property type="entry name" value="T12061"/>
</dbReference>
<dbReference type="RefSeq" id="NP_636057.1">
    <property type="nucleotide sequence ID" value="NC_003902.1"/>
</dbReference>
<dbReference type="SMR" id="P31740"/>
<dbReference type="STRING" id="190485.XCC0665"/>
<dbReference type="EnsemblBacteria" id="AAM39981">
    <property type="protein sequence ID" value="AAM39981"/>
    <property type="gene ID" value="XCC0665"/>
</dbReference>
<dbReference type="KEGG" id="xcc:XCC0665"/>
<dbReference type="PATRIC" id="fig|190485.4.peg.730"/>
<dbReference type="eggNOG" id="COG4795">
    <property type="taxonomic scope" value="Bacteria"/>
</dbReference>
<dbReference type="HOGENOM" id="CLU_101359_2_0_6"/>
<dbReference type="OrthoDB" id="5801210at2"/>
<dbReference type="Proteomes" id="UP000001010">
    <property type="component" value="Chromosome"/>
</dbReference>
<dbReference type="GO" id="GO:0016020">
    <property type="term" value="C:membrane"/>
    <property type="evidence" value="ECO:0007669"/>
    <property type="project" value="UniProtKB-SubCell"/>
</dbReference>
<dbReference type="GO" id="GO:0015031">
    <property type="term" value="P:protein transport"/>
    <property type="evidence" value="ECO:0007669"/>
    <property type="project" value="UniProtKB-KW"/>
</dbReference>
<dbReference type="InterPro" id="IPR012902">
    <property type="entry name" value="N_methyl_site"/>
</dbReference>
<dbReference type="NCBIfam" id="NF006453">
    <property type="entry name" value="PRK08808.1"/>
    <property type="match status" value="1"/>
</dbReference>
<dbReference type="PROSITE" id="PS00409">
    <property type="entry name" value="PROKAR_NTER_METHYL"/>
    <property type="match status" value="1"/>
</dbReference>
<organism>
    <name type="scientific">Xanthomonas campestris pv. campestris (strain ATCC 33913 / DSM 3586 / NCPPB 528 / LMG 568 / P 25)</name>
    <dbReference type="NCBI Taxonomy" id="190485"/>
    <lineage>
        <taxon>Bacteria</taxon>
        <taxon>Pseudomonadati</taxon>
        <taxon>Pseudomonadota</taxon>
        <taxon>Gammaproteobacteria</taxon>
        <taxon>Lysobacterales</taxon>
        <taxon>Lysobacteraceae</taxon>
        <taxon>Xanthomonas</taxon>
    </lineage>
</organism>
<reference key="1">
    <citation type="submission" date="1993-04" db="EMBL/GenBank/DDBJ databases">
        <authorList>
            <person name="Hu N.-T.T."/>
            <person name="Hung M.-N."/>
            <person name="Wang K.C."/>
        </authorList>
    </citation>
    <scope>NUCLEOTIDE SEQUENCE [GENOMIC DNA]</scope>
    <source>
        <strain>Xc1701</strain>
    </source>
</reference>
<reference key="2">
    <citation type="journal article" date="2002" name="Nature">
        <title>Comparison of the genomes of two Xanthomonas pathogens with differing host specificities.</title>
        <authorList>
            <person name="da Silva A.C.R."/>
            <person name="Ferro J.A."/>
            <person name="Reinach F.C."/>
            <person name="Farah C.S."/>
            <person name="Furlan L.R."/>
            <person name="Quaggio R.B."/>
            <person name="Monteiro-Vitorello C.B."/>
            <person name="Van Sluys M.A."/>
            <person name="Almeida N.F. Jr."/>
            <person name="Alves L.M.C."/>
            <person name="do Amaral A.M."/>
            <person name="Bertolini M.C."/>
            <person name="Camargo L.E.A."/>
            <person name="Camarotte G."/>
            <person name="Cannavan F."/>
            <person name="Cardozo J."/>
            <person name="Chambergo F."/>
            <person name="Ciapina L.P."/>
            <person name="Cicarelli R.M.B."/>
            <person name="Coutinho L.L."/>
            <person name="Cursino-Santos J.R."/>
            <person name="El-Dorry H."/>
            <person name="Faria J.B."/>
            <person name="Ferreira A.J.S."/>
            <person name="Ferreira R.C.C."/>
            <person name="Ferro M.I.T."/>
            <person name="Formighieri E.F."/>
            <person name="Franco M.C."/>
            <person name="Greggio C.C."/>
            <person name="Gruber A."/>
            <person name="Katsuyama A.M."/>
            <person name="Kishi L.T."/>
            <person name="Leite R.P."/>
            <person name="Lemos E.G.M."/>
            <person name="Lemos M.V.F."/>
            <person name="Locali E.C."/>
            <person name="Machado M.A."/>
            <person name="Madeira A.M.B.N."/>
            <person name="Martinez-Rossi N.M."/>
            <person name="Martins E.C."/>
            <person name="Meidanis J."/>
            <person name="Menck C.F.M."/>
            <person name="Miyaki C.Y."/>
            <person name="Moon D.H."/>
            <person name="Moreira L.M."/>
            <person name="Novo M.T.M."/>
            <person name="Okura V.K."/>
            <person name="Oliveira M.C."/>
            <person name="Oliveira V.R."/>
            <person name="Pereira H.A."/>
            <person name="Rossi A."/>
            <person name="Sena J.A.D."/>
            <person name="Silva C."/>
            <person name="de Souza R.F."/>
            <person name="Spinola L.A.F."/>
            <person name="Takita M.A."/>
            <person name="Tamura R.E."/>
            <person name="Teixeira E.C."/>
            <person name="Tezza R.I.D."/>
            <person name="Trindade dos Santos M."/>
            <person name="Truffi D."/>
            <person name="Tsai S.M."/>
            <person name="White F.F."/>
            <person name="Setubal J.C."/>
            <person name="Kitajima J.P."/>
        </authorList>
    </citation>
    <scope>NUCLEOTIDE SEQUENCE [LARGE SCALE GENOMIC DNA]</scope>
    <source>
        <strain>ATCC 33913 / DSM 3586 / NCPPB 528 / LMG 568 / P 25</strain>
    </source>
</reference>
<reference key="3">
    <citation type="journal article" date="1991" name="Mol. Gen. Genet.">
        <title>Structural characterization of protein secretion genes of the bacterial phytopathogen Xanthomonas campestris pathovar campestris: relatedness to secretion systems of other Gram-negative bacteria.</title>
        <authorList>
            <person name="Dums F."/>
            <person name="Dow J.M."/>
            <person name="Daniels M.J."/>
        </authorList>
    </citation>
    <scope>NUCLEOTIDE SEQUENCE [GENOMIC DNA] OF 1-57</scope>
    <source>
        <strain>8000 NCPPB 1145</strain>
    </source>
</reference>
<protein>
    <recommendedName>
        <fullName>Type II secretion system protein J</fullName>
        <shortName>T2SS protein J</shortName>
    </recommendedName>
    <alternativeName>
        <fullName>General secretion pathway protein J</fullName>
    </alternativeName>
</protein>